<reference key="1">
    <citation type="journal article" date="2012" name="PLoS ONE">
        <title>Characterization of profilin polymorphism in pollen with a focus on multifunctionality.</title>
        <authorList>
            <person name="Jimenez-Lopez J.C."/>
            <person name="Morales S."/>
            <person name="Castro A.J."/>
            <person name="Volkmann D."/>
            <person name="Rodriguez-Garcia M.I."/>
            <person name="Alche Jde D."/>
        </authorList>
    </citation>
    <scope>NUCLEOTIDE SEQUENCE [MRNA]</scope>
    <scope>POLYMORPHISM</scope>
    <source>
        <strain>cv. Avellana</strain>
    </source>
</reference>
<reference key="2">
    <citation type="journal article" date="2013" name="PLoS ONE">
        <title>Analysis of the effects of polymorphism on pollen profilin structural functionality and the generation of conformational, T- and B-cell epitopes.</title>
        <authorList>
            <person name="Jimenez-Lopez J.C."/>
            <person name="Rodriguez-Garcia M.I."/>
            <person name="Alche J.D."/>
        </authorList>
    </citation>
    <scope>3D-STRUCTURE MODELING</scope>
    <scope>DISULFIDE BOND</scope>
</reference>
<protein>
    <recommendedName>
        <fullName>Profilin-5</fullName>
    </recommendedName>
    <alternativeName>
        <fullName>Allergen Cor a 2</fullName>
    </alternativeName>
    <alternativeName>
        <fullName>Pollen allergen Cor a 2</fullName>
    </alternativeName>
    <allergenName>Cor a 2</allergenName>
</protein>
<sequence length="131" mass="14083">MSWQAYVDEHLMCEIDGHHLSAAAIIGHDGSVWAQSSTFPQFKPEEIAAIIKDFDEPGSLAPTGLHLGGIKYMVIQGESGAVIRGKKGAGGITVKKTSQALIFGIYDEPLTPGQCNMIVERLGDYLLKQGL</sequence>
<keyword id="KW-0009">Actin-binding</keyword>
<keyword id="KW-0020">Allergen</keyword>
<keyword id="KW-0963">Cytoplasm</keyword>
<keyword id="KW-0206">Cytoskeleton</keyword>
<keyword id="KW-1015">Disulfide bond</keyword>
<keyword id="KW-0597">Phosphoprotein</keyword>
<dbReference type="EMBL" id="DQ663545">
    <property type="protein sequence ID" value="ABG81298.1"/>
    <property type="molecule type" value="mRNA"/>
</dbReference>
<dbReference type="SMR" id="A4KA41"/>
<dbReference type="Allergome" id="244">
    <property type="allergen name" value="Cor a 2"/>
</dbReference>
<dbReference type="GO" id="GO:0005938">
    <property type="term" value="C:cell cortex"/>
    <property type="evidence" value="ECO:0007669"/>
    <property type="project" value="TreeGrafter"/>
</dbReference>
<dbReference type="GO" id="GO:0005856">
    <property type="term" value="C:cytoskeleton"/>
    <property type="evidence" value="ECO:0007669"/>
    <property type="project" value="UniProtKB-SubCell"/>
</dbReference>
<dbReference type="GO" id="GO:0003785">
    <property type="term" value="F:actin monomer binding"/>
    <property type="evidence" value="ECO:0007669"/>
    <property type="project" value="TreeGrafter"/>
</dbReference>
<dbReference type="CDD" id="cd00148">
    <property type="entry name" value="PROF"/>
    <property type="match status" value="1"/>
</dbReference>
<dbReference type="FunFam" id="3.30.450.30:FF:000001">
    <property type="entry name" value="Profilin"/>
    <property type="match status" value="1"/>
</dbReference>
<dbReference type="Gene3D" id="3.30.450.30">
    <property type="entry name" value="Dynein light chain 2a, cytoplasmic"/>
    <property type="match status" value="1"/>
</dbReference>
<dbReference type="InterPro" id="IPR048278">
    <property type="entry name" value="PFN"/>
</dbReference>
<dbReference type="InterPro" id="IPR005455">
    <property type="entry name" value="PFN_euk"/>
</dbReference>
<dbReference type="InterPro" id="IPR036140">
    <property type="entry name" value="PFN_sf"/>
</dbReference>
<dbReference type="InterPro" id="IPR027310">
    <property type="entry name" value="Profilin_CS"/>
</dbReference>
<dbReference type="PANTHER" id="PTHR11604">
    <property type="entry name" value="PROFILIN"/>
    <property type="match status" value="1"/>
</dbReference>
<dbReference type="PANTHER" id="PTHR11604:SF49">
    <property type="entry name" value="PROFILIN-2"/>
    <property type="match status" value="1"/>
</dbReference>
<dbReference type="Pfam" id="PF00235">
    <property type="entry name" value="Profilin"/>
    <property type="match status" value="1"/>
</dbReference>
<dbReference type="PRINTS" id="PR00392">
    <property type="entry name" value="PROFILIN"/>
</dbReference>
<dbReference type="PRINTS" id="PR01640">
    <property type="entry name" value="PROFILINPLNT"/>
</dbReference>
<dbReference type="SMART" id="SM00392">
    <property type="entry name" value="PROF"/>
    <property type="match status" value="1"/>
</dbReference>
<dbReference type="SUPFAM" id="SSF55770">
    <property type="entry name" value="Profilin (actin-binding protein)"/>
    <property type="match status" value="1"/>
</dbReference>
<dbReference type="PROSITE" id="PS00414">
    <property type="entry name" value="PROFILIN"/>
    <property type="match status" value="1"/>
</dbReference>
<accession>A4KA41</accession>
<evidence type="ECO:0000250" key="1"/>
<evidence type="ECO:0000305" key="2"/>
<evidence type="ECO:0000305" key="3">
    <source>
    </source>
</evidence>
<proteinExistence type="evidence at protein level"/>
<feature type="initiator methionine" description="Removed" evidence="1">
    <location>
        <position position="1"/>
    </location>
</feature>
<feature type="chain" id="PRO_0000424967" description="Profilin-5">
    <location>
        <begin position="2"/>
        <end position="131"/>
    </location>
</feature>
<feature type="short sequence motif" description="Involved in PIP2 interaction">
    <location>
        <begin position="81"/>
        <end position="97"/>
    </location>
</feature>
<feature type="modified residue" description="Phosphothreonine" evidence="1">
    <location>
        <position position="111"/>
    </location>
</feature>
<feature type="disulfide bond" evidence="3">
    <location>
        <begin position="13"/>
        <end position="115"/>
    </location>
</feature>
<organism>
    <name type="scientific">Corylus avellana</name>
    <name type="common">European hazel</name>
    <name type="synonym">Corylus maxima</name>
    <dbReference type="NCBI Taxonomy" id="13451"/>
    <lineage>
        <taxon>Eukaryota</taxon>
        <taxon>Viridiplantae</taxon>
        <taxon>Streptophyta</taxon>
        <taxon>Embryophyta</taxon>
        <taxon>Tracheophyta</taxon>
        <taxon>Spermatophyta</taxon>
        <taxon>Magnoliopsida</taxon>
        <taxon>eudicotyledons</taxon>
        <taxon>Gunneridae</taxon>
        <taxon>Pentapetalae</taxon>
        <taxon>rosids</taxon>
        <taxon>fabids</taxon>
        <taxon>Fagales</taxon>
        <taxon>Betulaceae</taxon>
        <taxon>Corylus</taxon>
    </lineage>
</organism>
<name>PROF5_CORAV</name>
<comment type="function">
    <text evidence="1">Binds to actin and affects the structure of the cytoskeleton. At high concentrations, profilin prevents the polymerization of actin, whereas it enhances it at low concentrations (By similarity).</text>
</comment>
<comment type="subunit">
    <text evidence="1">Occurs in many kinds of cells as a complex with monomeric actin in a 1:1 ratio.</text>
</comment>
<comment type="subcellular location">
    <subcellularLocation>
        <location evidence="1">Cytoplasm</location>
        <location evidence="1">Cytoskeleton</location>
    </subcellularLocation>
</comment>
<comment type="PTM">
    <text evidence="1">Phosphorylated by MAP kinases.</text>
</comment>
<comment type="polymorphism">
    <text>Several isoforms of the allergen exist due to polymorphism.</text>
</comment>
<comment type="allergen">
    <text>Causes an allergic reaction in human.</text>
</comment>
<comment type="miscellaneous">
    <text evidence="3">The variability of the residues taking part of IgE-binding epitopes might be responsible of the difference in cross-reactivity among olive pollen cultivars, and between distantly related pollen species, leading to a variable range of allergy reactions among atopic patients.</text>
</comment>
<comment type="similarity">
    <text evidence="2">Belongs to the profilin family.</text>
</comment>